<protein>
    <recommendedName>
        <fullName evidence="4">RUS family member 1</fullName>
    </recommendedName>
</protein>
<proteinExistence type="evidence at protein level"/>
<feature type="initiator methionine" description="Removed" evidence="1">
    <location>
        <position position="1"/>
    </location>
</feature>
<feature type="chain" id="PRO_0000282931" description="RUS family member 1">
    <location>
        <begin position="2"/>
        <end position="466"/>
    </location>
</feature>
<feature type="transmembrane region" description="Helical" evidence="2">
    <location>
        <begin position="245"/>
        <end position="265"/>
    </location>
</feature>
<feature type="modified residue" description="N-acetylalanine" evidence="1">
    <location>
        <position position="2"/>
    </location>
</feature>
<feature type="splice variant" id="VSP_024257" description="In isoform 2." evidence="3">
    <original>TGFWPSLSLSLGVPLHHLVSS</original>
    <variation>IGDPSLWFLVPGFPSLPSPSA</variation>
    <location>
        <begin position="317"/>
        <end position="337"/>
    </location>
</feature>
<feature type="splice variant" id="VSP_024258" description="In isoform 2." evidence="3">
    <location>
        <begin position="338"/>
        <end position="466"/>
    </location>
</feature>
<feature type="sequence conflict" description="In Ref. 1; BAE28428." evidence="4" ref="1">
    <original>G</original>
    <variation>C</variation>
    <location>
        <position position="41"/>
    </location>
</feature>
<feature type="sequence conflict" description="In Ref. 1; BAE41911/BAE29003/BAE28428." evidence="4" ref="1">
    <original>L</original>
    <variation>F</variation>
    <location>
        <position position="147"/>
    </location>
</feature>
<feature type="sequence conflict" description="In Ref. 1; BAE29003/BAE28428." evidence="4" ref="1">
    <original>Q</original>
    <variation>R</variation>
    <location>
        <position position="364"/>
    </location>
</feature>
<feature type="sequence conflict" description="In Ref. 1; BAE29003/BAE28428." evidence="4" ref="1">
    <original>E</original>
    <variation>Q</variation>
    <location>
        <position position="401"/>
    </location>
</feature>
<sequence length="466" mass="50469">MADAASLRAPLCTEQFGSGAPRGCSAAADGSLQWDGARRWGWLSRAPIAKPGQHAGGGGGPWAALTALSGLRSVLLPQGFPDSVSPDYLPYQLWDSVQAFASSLSGSLATQAVLQGLGVGNAKASVSAATSTWLVKDSTGMLGRIILAWWKGSKLDCNAKQWRLFADILNDVAMFLEIMAPMYPIFFTMTVSTSNLAKCIVGVAGGATRAALTMHQARRNNMADVSAKDSSQETVVNLAGLLVSLLMLPLVSDCPSLSLGCFVLLTALHIYANYRAVRALVLETLNESRLQLVLEHFLQRGEVLEPASANQMEPLWTGFWPSLSLSLGVPLHHLVSSVSELKQLVEGHHEPYLLCWNKSRNQVQVALSQEAGPETVLRAATHGLILGALQEDGPLPGELAELRHQVQADPKKESWILVRETHQVLDTLFPKFLKGLQAAGWKTEKHHLEVDEWRATWPLSPEKKVL</sequence>
<keyword id="KW-0007">Acetylation</keyword>
<keyword id="KW-0025">Alternative splicing</keyword>
<keyword id="KW-0472">Membrane</keyword>
<keyword id="KW-1185">Reference proteome</keyword>
<keyword id="KW-0812">Transmembrane</keyword>
<keyword id="KW-1133">Transmembrane helix</keyword>
<gene>
    <name evidence="5" type="primary">Rusf1</name>
</gene>
<accession>Q91W34</accession>
<accession>Q3TCP4</accession>
<accession>Q3UEA8</accession>
<accession>Q3UFY1</accession>
<dbReference type="EMBL" id="AK148236">
    <property type="protein sequence ID" value="BAE28428.1"/>
    <property type="molecule type" value="mRNA"/>
</dbReference>
<dbReference type="EMBL" id="AK149645">
    <property type="protein sequence ID" value="BAE29003.1"/>
    <property type="molecule type" value="mRNA"/>
</dbReference>
<dbReference type="EMBL" id="AK170611">
    <property type="protein sequence ID" value="BAE41911.1"/>
    <property type="molecule type" value="mRNA"/>
</dbReference>
<dbReference type="EMBL" id="BC017158">
    <property type="protein sequence ID" value="AAH17158.1"/>
    <property type="molecule type" value="mRNA"/>
</dbReference>
<dbReference type="CCDS" id="CCDS21895.1">
    <molecule id="Q91W34-1"/>
</dbReference>
<dbReference type="RefSeq" id="NP_663565.2">
    <property type="nucleotide sequence ID" value="NM_145590.2"/>
</dbReference>
<dbReference type="BioGRID" id="231477">
    <property type="interactions" value="1"/>
</dbReference>
<dbReference type="FunCoup" id="Q91W34">
    <property type="interactions" value="801"/>
</dbReference>
<dbReference type="STRING" id="10090.ENSMUSP00000033044"/>
<dbReference type="iPTMnet" id="Q91W34"/>
<dbReference type="PhosphoSitePlus" id="Q91W34"/>
<dbReference type="SwissPalm" id="Q91W34"/>
<dbReference type="PaxDb" id="10090-ENSMUSP00000033044"/>
<dbReference type="PeptideAtlas" id="Q91W34"/>
<dbReference type="Pumba" id="Q91W34"/>
<dbReference type="DNASU" id="233913"/>
<dbReference type="GeneID" id="233913"/>
<dbReference type="KEGG" id="mmu:233913"/>
<dbReference type="UCSC" id="uc009jyv.2">
    <molecule id="Q91W34-1"/>
    <property type="organism name" value="mouse"/>
</dbReference>
<dbReference type="AGR" id="MGI:2384572"/>
<dbReference type="CTD" id="64755"/>
<dbReference type="MGI" id="MGI:2384572">
    <property type="gene designation" value="Rusf1"/>
</dbReference>
<dbReference type="eggNOG" id="KOG4249">
    <property type="taxonomic scope" value="Eukaryota"/>
</dbReference>
<dbReference type="InParanoid" id="Q91W34"/>
<dbReference type="OrthoDB" id="364779at2759"/>
<dbReference type="PhylomeDB" id="Q91W34"/>
<dbReference type="TreeFam" id="TF326424"/>
<dbReference type="BioGRID-ORCS" id="233913">
    <property type="hits" value="1 hit in 77 CRISPR screens"/>
</dbReference>
<dbReference type="PRO" id="PR:Q91W34"/>
<dbReference type="Proteomes" id="UP000000589">
    <property type="component" value="Unplaced"/>
</dbReference>
<dbReference type="RNAct" id="Q91W34">
    <property type="molecule type" value="protein"/>
</dbReference>
<dbReference type="GO" id="GO:0016020">
    <property type="term" value="C:membrane"/>
    <property type="evidence" value="ECO:0007669"/>
    <property type="project" value="UniProtKB-SubCell"/>
</dbReference>
<dbReference type="InterPro" id="IPR006968">
    <property type="entry name" value="RUS_fam"/>
</dbReference>
<dbReference type="InterPro" id="IPR055412">
    <property type="entry name" value="UVB_sens_C"/>
</dbReference>
<dbReference type="InterPro" id="IPR054549">
    <property type="entry name" value="UVB_sens_RUS_dom"/>
</dbReference>
<dbReference type="PANTHER" id="PTHR12770:SF31">
    <property type="entry name" value="RUS FAMILY MEMBER 1"/>
    <property type="match status" value="1"/>
</dbReference>
<dbReference type="PANTHER" id="PTHR12770">
    <property type="entry name" value="RUS1 FAMILY PROTEIN C16ORF58"/>
    <property type="match status" value="1"/>
</dbReference>
<dbReference type="Pfam" id="PF24160">
    <property type="entry name" value="UVB_sens_C"/>
    <property type="match status" value="1"/>
</dbReference>
<dbReference type="Pfam" id="PF04884">
    <property type="entry name" value="UVB_sens_prot"/>
    <property type="match status" value="1"/>
</dbReference>
<name>RUSF1_MOUSE</name>
<comment type="subcellular location">
    <subcellularLocation>
        <location evidence="4">Membrane</location>
        <topology evidence="4">Single-pass membrane protein</topology>
    </subcellularLocation>
</comment>
<comment type="alternative products">
    <event type="alternative splicing"/>
    <isoform>
        <id>Q91W34-1</id>
        <name>1</name>
        <sequence type="displayed"/>
    </isoform>
    <isoform>
        <id>Q91W34-2</id>
        <name>2</name>
        <sequence type="described" ref="VSP_024257 VSP_024258"/>
    </isoform>
</comment>
<comment type="similarity">
    <text evidence="4">Belongs to the RUS1 family.</text>
</comment>
<reference key="1">
    <citation type="journal article" date="2005" name="Science">
        <title>The transcriptional landscape of the mammalian genome.</title>
        <authorList>
            <person name="Carninci P."/>
            <person name="Kasukawa T."/>
            <person name="Katayama S."/>
            <person name="Gough J."/>
            <person name="Frith M.C."/>
            <person name="Maeda N."/>
            <person name="Oyama R."/>
            <person name="Ravasi T."/>
            <person name="Lenhard B."/>
            <person name="Wells C."/>
            <person name="Kodzius R."/>
            <person name="Shimokawa K."/>
            <person name="Bajic V.B."/>
            <person name="Brenner S.E."/>
            <person name="Batalov S."/>
            <person name="Forrest A.R."/>
            <person name="Zavolan M."/>
            <person name="Davis M.J."/>
            <person name="Wilming L.G."/>
            <person name="Aidinis V."/>
            <person name="Allen J.E."/>
            <person name="Ambesi-Impiombato A."/>
            <person name="Apweiler R."/>
            <person name="Aturaliya R.N."/>
            <person name="Bailey T.L."/>
            <person name="Bansal M."/>
            <person name="Baxter L."/>
            <person name="Beisel K.W."/>
            <person name="Bersano T."/>
            <person name="Bono H."/>
            <person name="Chalk A.M."/>
            <person name="Chiu K.P."/>
            <person name="Choudhary V."/>
            <person name="Christoffels A."/>
            <person name="Clutterbuck D.R."/>
            <person name="Crowe M.L."/>
            <person name="Dalla E."/>
            <person name="Dalrymple B.P."/>
            <person name="de Bono B."/>
            <person name="Della Gatta G."/>
            <person name="di Bernardo D."/>
            <person name="Down T."/>
            <person name="Engstrom P."/>
            <person name="Fagiolini M."/>
            <person name="Faulkner G."/>
            <person name="Fletcher C.F."/>
            <person name="Fukushima T."/>
            <person name="Furuno M."/>
            <person name="Futaki S."/>
            <person name="Gariboldi M."/>
            <person name="Georgii-Hemming P."/>
            <person name="Gingeras T.R."/>
            <person name="Gojobori T."/>
            <person name="Green R.E."/>
            <person name="Gustincich S."/>
            <person name="Harbers M."/>
            <person name="Hayashi Y."/>
            <person name="Hensch T.K."/>
            <person name="Hirokawa N."/>
            <person name="Hill D."/>
            <person name="Huminiecki L."/>
            <person name="Iacono M."/>
            <person name="Ikeo K."/>
            <person name="Iwama A."/>
            <person name="Ishikawa T."/>
            <person name="Jakt M."/>
            <person name="Kanapin A."/>
            <person name="Katoh M."/>
            <person name="Kawasawa Y."/>
            <person name="Kelso J."/>
            <person name="Kitamura H."/>
            <person name="Kitano H."/>
            <person name="Kollias G."/>
            <person name="Krishnan S.P."/>
            <person name="Kruger A."/>
            <person name="Kummerfeld S.K."/>
            <person name="Kurochkin I.V."/>
            <person name="Lareau L.F."/>
            <person name="Lazarevic D."/>
            <person name="Lipovich L."/>
            <person name="Liu J."/>
            <person name="Liuni S."/>
            <person name="McWilliam S."/>
            <person name="Madan Babu M."/>
            <person name="Madera M."/>
            <person name="Marchionni L."/>
            <person name="Matsuda H."/>
            <person name="Matsuzawa S."/>
            <person name="Miki H."/>
            <person name="Mignone F."/>
            <person name="Miyake S."/>
            <person name="Morris K."/>
            <person name="Mottagui-Tabar S."/>
            <person name="Mulder N."/>
            <person name="Nakano N."/>
            <person name="Nakauchi H."/>
            <person name="Ng P."/>
            <person name="Nilsson R."/>
            <person name="Nishiguchi S."/>
            <person name="Nishikawa S."/>
            <person name="Nori F."/>
            <person name="Ohara O."/>
            <person name="Okazaki Y."/>
            <person name="Orlando V."/>
            <person name="Pang K.C."/>
            <person name="Pavan W.J."/>
            <person name="Pavesi G."/>
            <person name="Pesole G."/>
            <person name="Petrovsky N."/>
            <person name="Piazza S."/>
            <person name="Reed J."/>
            <person name="Reid J.F."/>
            <person name="Ring B.Z."/>
            <person name="Ringwald M."/>
            <person name="Rost B."/>
            <person name="Ruan Y."/>
            <person name="Salzberg S.L."/>
            <person name="Sandelin A."/>
            <person name="Schneider C."/>
            <person name="Schoenbach C."/>
            <person name="Sekiguchi K."/>
            <person name="Semple C.A."/>
            <person name="Seno S."/>
            <person name="Sessa L."/>
            <person name="Sheng Y."/>
            <person name="Shibata Y."/>
            <person name="Shimada H."/>
            <person name="Shimada K."/>
            <person name="Silva D."/>
            <person name="Sinclair B."/>
            <person name="Sperling S."/>
            <person name="Stupka E."/>
            <person name="Sugiura K."/>
            <person name="Sultana R."/>
            <person name="Takenaka Y."/>
            <person name="Taki K."/>
            <person name="Tammoja K."/>
            <person name="Tan S.L."/>
            <person name="Tang S."/>
            <person name="Taylor M.S."/>
            <person name="Tegner J."/>
            <person name="Teichmann S.A."/>
            <person name="Ueda H.R."/>
            <person name="van Nimwegen E."/>
            <person name="Verardo R."/>
            <person name="Wei C.L."/>
            <person name="Yagi K."/>
            <person name="Yamanishi H."/>
            <person name="Zabarovsky E."/>
            <person name="Zhu S."/>
            <person name="Zimmer A."/>
            <person name="Hide W."/>
            <person name="Bult C."/>
            <person name="Grimmond S.M."/>
            <person name="Teasdale R.D."/>
            <person name="Liu E.T."/>
            <person name="Brusic V."/>
            <person name="Quackenbush J."/>
            <person name="Wahlestedt C."/>
            <person name="Mattick J.S."/>
            <person name="Hume D.A."/>
            <person name="Kai C."/>
            <person name="Sasaki D."/>
            <person name="Tomaru Y."/>
            <person name="Fukuda S."/>
            <person name="Kanamori-Katayama M."/>
            <person name="Suzuki M."/>
            <person name="Aoki J."/>
            <person name="Arakawa T."/>
            <person name="Iida J."/>
            <person name="Imamura K."/>
            <person name="Itoh M."/>
            <person name="Kato T."/>
            <person name="Kawaji H."/>
            <person name="Kawagashira N."/>
            <person name="Kawashima T."/>
            <person name="Kojima M."/>
            <person name="Kondo S."/>
            <person name="Konno H."/>
            <person name="Nakano K."/>
            <person name="Ninomiya N."/>
            <person name="Nishio T."/>
            <person name="Okada M."/>
            <person name="Plessy C."/>
            <person name="Shibata K."/>
            <person name="Shiraki T."/>
            <person name="Suzuki S."/>
            <person name="Tagami M."/>
            <person name="Waki K."/>
            <person name="Watahiki A."/>
            <person name="Okamura-Oho Y."/>
            <person name="Suzuki H."/>
            <person name="Kawai J."/>
            <person name="Hayashizaki Y."/>
        </authorList>
    </citation>
    <scope>NUCLEOTIDE SEQUENCE [LARGE SCALE MRNA] (ISOFORMS 1 AND 2)</scope>
    <source>
        <strain>C57BL/6J</strain>
        <strain>NOD</strain>
        <tissue>Bone marrow</tissue>
    </source>
</reference>
<reference key="2">
    <citation type="journal article" date="2004" name="Genome Res.">
        <title>The status, quality, and expansion of the NIH full-length cDNA project: the Mammalian Gene Collection (MGC).</title>
        <authorList>
            <consortium name="The MGC Project Team"/>
        </authorList>
    </citation>
    <scope>NUCLEOTIDE SEQUENCE [LARGE SCALE MRNA] (ISOFORM 1)</scope>
    <source>
        <strain>FVB/N</strain>
        <tissue>Salivary gland</tissue>
    </source>
</reference>
<reference key="3">
    <citation type="journal article" date="2010" name="Cell">
        <title>A tissue-specific atlas of mouse protein phosphorylation and expression.</title>
        <authorList>
            <person name="Huttlin E.L."/>
            <person name="Jedrychowski M.P."/>
            <person name="Elias J.E."/>
            <person name="Goswami T."/>
            <person name="Rad R."/>
            <person name="Beausoleil S.A."/>
            <person name="Villen J."/>
            <person name="Haas W."/>
            <person name="Sowa M.E."/>
            <person name="Gygi S.P."/>
        </authorList>
    </citation>
    <scope>IDENTIFICATION BY MASS SPECTROMETRY [LARGE SCALE ANALYSIS]</scope>
    <source>
        <tissue>Brown adipose tissue</tissue>
        <tissue>Liver</tissue>
        <tissue>Lung</tissue>
        <tissue>Pancreas</tissue>
        <tissue>Spleen</tissue>
        <tissue>Testis</tissue>
    </source>
</reference>
<organism>
    <name type="scientific">Mus musculus</name>
    <name type="common">Mouse</name>
    <dbReference type="NCBI Taxonomy" id="10090"/>
    <lineage>
        <taxon>Eukaryota</taxon>
        <taxon>Metazoa</taxon>
        <taxon>Chordata</taxon>
        <taxon>Craniata</taxon>
        <taxon>Vertebrata</taxon>
        <taxon>Euteleostomi</taxon>
        <taxon>Mammalia</taxon>
        <taxon>Eutheria</taxon>
        <taxon>Euarchontoglires</taxon>
        <taxon>Glires</taxon>
        <taxon>Rodentia</taxon>
        <taxon>Myomorpha</taxon>
        <taxon>Muroidea</taxon>
        <taxon>Muridae</taxon>
        <taxon>Murinae</taxon>
        <taxon>Mus</taxon>
        <taxon>Mus</taxon>
    </lineage>
</organism>
<evidence type="ECO:0000250" key="1">
    <source>
        <dbReference type="UniProtKB" id="Q96GQ5"/>
    </source>
</evidence>
<evidence type="ECO:0000255" key="2"/>
<evidence type="ECO:0000303" key="3">
    <source>
    </source>
</evidence>
<evidence type="ECO:0000305" key="4"/>
<evidence type="ECO:0000312" key="5">
    <source>
        <dbReference type="MGI" id="MGI:2384572"/>
    </source>
</evidence>